<comment type="function">
    <text evidence="1">Plays an important role in homologous strand exchange, a key step in DNA repair through homologous recombination (HR). Binds to single-stranded DNA in an ATP-dependent manner to form nucleoprotein filaments which are essential for the homology search and strand exchange. Catalyzes the recognition of homology and strand exchange between homologous DNA partners to form a joint molecule between a processed DNA break and the repair template. Recruited to resolve stalled replication forks during replication stress. Also involved in interstrand cross-link repair.</text>
</comment>
<comment type="subunit">
    <text evidence="1">Forms linear homooligomers, giving rise to a RAD51 nucleoprotein filament, which is essential for strand-pairing reactions during DNA recombination.</text>
</comment>
<comment type="subcellular location">
    <subcellularLocation>
        <location evidence="1">Nucleus</location>
    </subcellularLocation>
    <subcellularLocation>
        <location evidence="1">Cytoplasm</location>
    </subcellularLocation>
    <subcellularLocation>
        <location evidence="1">Chromosome</location>
    </subcellularLocation>
    <text evidence="1">Accumulated at sites of DNA damage. Recruited to stalled replication forks during replication stress.</text>
</comment>
<comment type="similarity">
    <text evidence="3">Belongs to the RecA family. RAD51 subfamily.</text>
</comment>
<dbReference type="EMBL" id="D38489">
    <property type="protein sequence ID" value="BAA07501.1"/>
    <property type="molecule type" value="mRNA"/>
</dbReference>
<dbReference type="EMBL" id="BC088930">
    <property type="protein sequence ID" value="AAH88930.1"/>
    <property type="molecule type" value="mRNA"/>
</dbReference>
<dbReference type="RefSeq" id="NP_001081236.1">
    <property type="nucleotide sequence ID" value="NM_001087767.1"/>
</dbReference>
<dbReference type="SMR" id="Q91918"/>
<dbReference type="DNASU" id="397726"/>
<dbReference type="GeneID" id="397726"/>
<dbReference type="KEGG" id="xla:397726"/>
<dbReference type="AGR" id="Xenbase:XB-GENE-1016887"/>
<dbReference type="CTD" id="397726"/>
<dbReference type="Xenbase" id="XB-GENE-1016887">
    <property type="gene designation" value="rad51.S"/>
</dbReference>
<dbReference type="OrthoDB" id="10251254at2759"/>
<dbReference type="Proteomes" id="UP000186698">
    <property type="component" value="Chromosome 8S"/>
</dbReference>
<dbReference type="Bgee" id="397726">
    <property type="expression patterns" value="Expressed in oocyte and 11 other cell types or tissues"/>
</dbReference>
<dbReference type="GO" id="GO:0005694">
    <property type="term" value="C:chromosome"/>
    <property type="evidence" value="ECO:0000250"/>
    <property type="project" value="UniProtKB"/>
</dbReference>
<dbReference type="GO" id="GO:0000794">
    <property type="term" value="C:condensed nuclear chromosome"/>
    <property type="evidence" value="ECO:0000318"/>
    <property type="project" value="GO_Central"/>
</dbReference>
<dbReference type="GO" id="GO:0005737">
    <property type="term" value="C:cytoplasm"/>
    <property type="evidence" value="ECO:0000250"/>
    <property type="project" value="UniProtKB"/>
</dbReference>
<dbReference type="GO" id="GO:0000228">
    <property type="term" value="C:nuclear chromosome"/>
    <property type="evidence" value="ECO:0000250"/>
    <property type="project" value="UniProtKB"/>
</dbReference>
<dbReference type="GO" id="GO:0005634">
    <property type="term" value="C:nucleus"/>
    <property type="evidence" value="ECO:0000250"/>
    <property type="project" value="UniProtKB"/>
</dbReference>
<dbReference type="GO" id="GO:0005524">
    <property type="term" value="F:ATP binding"/>
    <property type="evidence" value="ECO:0007669"/>
    <property type="project" value="UniProtKB-KW"/>
</dbReference>
<dbReference type="GO" id="GO:0016887">
    <property type="term" value="F:ATP hydrolysis activity"/>
    <property type="evidence" value="ECO:0007669"/>
    <property type="project" value="InterPro"/>
</dbReference>
<dbReference type="GO" id="GO:0008094">
    <property type="term" value="F:ATP-dependent activity, acting on DNA"/>
    <property type="evidence" value="ECO:0000318"/>
    <property type="project" value="GO_Central"/>
</dbReference>
<dbReference type="GO" id="GO:0140664">
    <property type="term" value="F:ATP-dependent DNA damage sensor activity"/>
    <property type="evidence" value="ECO:0007669"/>
    <property type="project" value="InterPro"/>
</dbReference>
<dbReference type="GO" id="GO:0000150">
    <property type="term" value="F:DNA strand exchange activity"/>
    <property type="evidence" value="ECO:0000318"/>
    <property type="project" value="GO_Central"/>
</dbReference>
<dbReference type="GO" id="GO:0003690">
    <property type="term" value="F:double-stranded DNA binding"/>
    <property type="evidence" value="ECO:0000250"/>
    <property type="project" value="UniProtKB"/>
</dbReference>
<dbReference type="GO" id="GO:0003697">
    <property type="term" value="F:single-stranded DNA binding"/>
    <property type="evidence" value="ECO:0000250"/>
    <property type="project" value="UniProtKB"/>
</dbReference>
<dbReference type="GO" id="GO:0017116">
    <property type="term" value="F:single-stranded DNA helicase activity"/>
    <property type="evidence" value="ECO:0000250"/>
    <property type="project" value="UniProtKB"/>
</dbReference>
<dbReference type="GO" id="GO:0070192">
    <property type="term" value="P:chromosome organization involved in meiotic cell cycle"/>
    <property type="evidence" value="ECO:0000318"/>
    <property type="project" value="GO_Central"/>
</dbReference>
<dbReference type="GO" id="GO:0006974">
    <property type="term" value="P:DNA damage response"/>
    <property type="evidence" value="ECO:0000250"/>
    <property type="project" value="UniProtKB"/>
</dbReference>
<dbReference type="GO" id="GO:0000730">
    <property type="term" value="P:DNA recombinase assembly"/>
    <property type="evidence" value="ECO:0000250"/>
    <property type="project" value="UniProtKB"/>
</dbReference>
<dbReference type="GO" id="GO:0042148">
    <property type="term" value="P:DNA strand invasion"/>
    <property type="evidence" value="ECO:0000318"/>
    <property type="project" value="GO_Central"/>
</dbReference>
<dbReference type="GO" id="GO:0000724">
    <property type="term" value="P:double-strand break repair via homologous recombination"/>
    <property type="evidence" value="ECO:0000250"/>
    <property type="project" value="UniProtKB"/>
</dbReference>
<dbReference type="GO" id="GO:0006312">
    <property type="term" value="P:mitotic recombination"/>
    <property type="evidence" value="ECO:0000318"/>
    <property type="project" value="GO_Central"/>
</dbReference>
<dbReference type="GO" id="GO:1990426">
    <property type="term" value="P:mitotic recombination-dependent replication fork processing"/>
    <property type="evidence" value="ECO:0007669"/>
    <property type="project" value="InterPro"/>
</dbReference>
<dbReference type="GO" id="GO:0007131">
    <property type="term" value="P:reciprocal meiotic recombination"/>
    <property type="evidence" value="ECO:0000318"/>
    <property type="project" value="GO_Central"/>
</dbReference>
<dbReference type="CDD" id="cd19513">
    <property type="entry name" value="Rad51"/>
    <property type="match status" value="1"/>
</dbReference>
<dbReference type="FunFam" id="1.10.150.20:FF:000008">
    <property type="entry name" value="DNA repair protein RAD51 homolog"/>
    <property type="match status" value="1"/>
</dbReference>
<dbReference type="FunFam" id="3.40.50.300:FF:000092">
    <property type="entry name" value="DNA repair protein Rad51 homolog"/>
    <property type="match status" value="1"/>
</dbReference>
<dbReference type="Gene3D" id="1.10.150.20">
    <property type="entry name" value="5' to 3' exonuclease, C-terminal subdomain"/>
    <property type="match status" value="1"/>
</dbReference>
<dbReference type="Gene3D" id="3.40.50.300">
    <property type="entry name" value="P-loop containing nucleotide triphosphate hydrolases"/>
    <property type="match status" value="1"/>
</dbReference>
<dbReference type="InterPro" id="IPR003593">
    <property type="entry name" value="AAA+_ATPase"/>
</dbReference>
<dbReference type="InterPro" id="IPR011941">
    <property type="entry name" value="DNA_recomb/repair_Rad51"/>
</dbReference>
<dbReference type="InterPro" id="IPR013632">
    <property type="entry name" value="DNA_recomb/repair_Rad51_C"/>
</dbReference>
<dbReference type="InterPro" id="IPR016467">
    <property type="entry name" value="DNA_recomb/repair_RecA-like"/>
</dbReference>
<dbReference type="InterPro" id="IPR010995">
    <property type="entry name" value="DNA_repair_Rad51/TF_NusA_a-hlx"/>
</dbReference>
<dbReference type="InterPro" id="IPR027417">
    <property type="entry name" value="P-loop_NTPase"/>
</dbReference>
<dbReference type="InterPro" id="IPR020588">
    <property type="entry name" value="RecA_ATP-bd"/>
</dbReference>
<dbReference type="InterPro" id="IPR020587">
    <property type="entry name" value="RecA_monomer-monomer_interface"/>
</dbReference>
<dbReference type="NCBIfam" id="NF003301">
    <property type="entry name" value="PRK04301.1"/>
    <property type="match status" value="1"/>
</dbReference>
<dbReference type="NCBIfam" id="TIGR02239">
    <property type="entry name" value="recomb_RAD51"/>
    <property type="match status" value="1"/>
</dbReference>
<dbReference type="PANTHER" id="PTHR22942:SF39">
    <property type="entry name" value="DNA REPAIR PROTEIN RAD51 HOMOLOG 1"/>
    <property type="match status" value="1"/>
</dbReference>
<dbReference type="PANTHER" id="PTHR22942">
    <property type="entry name" value="RECA/RAD51/RADA DNA STRAND-PAIRING FAMILY MEMBER"/>
    <property type="match status" value="1"/>
</dbReference>
<dbReference type="Pfam" id="PF14520">
    <property type="entry name" value="HHH_5"/>
    <property type="match status" value="1"/>
</dbReference>
<dbReference type="Pfam" id="PF08423">
    <property type="entry name" value="Rad51"/>
    <property type="match status" value="1"/>
</dbReference>
<dbReference type="PIRSF" id="PIRSF005856">
    <property type="entry name" value="Rad51"/>
    <property type="match status" value="1"/>
</dbReference>
<dbReference type="SMART" id="SM00382">
    <property type="entry name" value="AAA"/>
    <property type="match status" value="1"/>
</dbReference>
<dbReference type="SUPFAM" id="SSF52540">
    <property type="entry name" value="P-loop containing nucleoside triphosphate hydrolases"/>
    <property type="match status" value="1"/>
</dbReference>
<dbReference type="SUPFAM" id="SSF47794">
    <property type="entry name" value="Rad51 N-terminal domain-like"/>
    <property type="match status" value="1"/>
</dbReference>
<dbReference type="PROSITE" id="PS50162">
    <property type="entry name" value="RECA_2"/>
    <property type="match status" value="1"/>
</dbReference>
<dbReference type="PROSITE" id="PS50163">
    <property type="entry name" value="RECA_3"/>
    <property type="match status" value="1"/>
</dbReference>
<gene>
    <name type="primary">rad51-a</name>
    <name type="synonym">rad51-1</name>
    <name type="synonym">rad51.1</name>
</gene>
<protein>
    <recommendedName>
        <fullName>DNA repair protein RAD51 homolog A</fullName>
        <shortName>xRAD51.1</shortName>
    </recommendedName>
</protein>
<name>RA51A_XENLA</name>
<accession>Q91918</accession>
<accession>Q5HZQ1</accession>
<keyword id="KW-0067">ATP-binding</keyword>
<keyword id="KW-0158">Chromosome</keyword>
<keyword id="KW-0963">Cytoplasm</keyword>
<keyword id="KW-0238">DNA-binding</keyword>
<keyword id="KW-0547">Nucleotide-binding</keyword>
<keyword id="KW-0539">Nucleus</keyword>
<keyword id="KW-1185">Reference proteome</keyword>
<reference key="1">
    <citation type="journal article" date="1995" name="Gene">
        <title>RAD51 homologues in Xenopus laevis: two distinct genes are highly expressed in ovary and testis.</title>
        <authorList>
            <person name="Maeshima K."/>
            <person name="Morimatsu K."/>
            <person name="Shinohara A."/>
            <person name="Horii T."/>
        </authorList>
    </citation>
    <scope>NUCLEOTIDE SEQUENCE [MRNA]</scope>
    <source>
        <tissue>Ovary</tissue>
    </source>
</reference>
<reference key="2">
    <citation type="submission" date="2005-01" db="EMBL/GenBank/DDBJ databases">
        <authorList>
            <consortium name="NIH - Xenopus Gene Collection (XGC) project"/>
        </authorList>
    </citation>
    <scope>NUCLEOTIDE SEQUENCE [LARGE SCALE MRNA]</scope>
    <source>
        <tissue>Egg</tissue>
    </source>
</reference>
<evidence type="ECO:0000250" key="1">
    <source>
        <dbReference type="UniProtKB" id="Q06609"/>
    </source>
</evidence>
<evidence type="ECO:0000255" key="2"/>
<evidence type="ECO:0000305" key="3"/>
<feature type="chain" id="PRO_0000122936" description="DNA repair protein RAD51 homolog A">
    <location>
        <begin position="1"/>
        <end position="336"/>
    </location>
</feature>
<feature type="domain" description="HhH">
    <location>
        <begin position="45"/>
        <end position="74"/>
    </location>
</feature>
<feature type="short sequence motif" description="Nuclear export signal" evidence="1">
    <location>
        <begin position="242"/>
        <end position="257"/>
    </location>
</feature>
<feature type="binding site" evidence="2">
    <location>
        <begin position="124"/>
        <end position="131"/>
    </location>
    <ligand>
        <name>ATP</name>
        <dbReference type="ChEBI" id="CHEBI:30616"/>
    </ligand>
</feature>
<proteinExistence type="evidence at transcript level"/>
<organism>
    <name type="scientific">Xenopus laevis</name>
    <name type="common">African clawed frog</name>
    <dbReference type="NCBI Taxonomy" id="8355"/>
    <lineage>
        <taxon>Eukaryota</taxon>
        <taxon>Metazoa</taxon>
        <taxon>Chordata</taxon>
        <taxon>Craniata</taxon>
        <taxon>Vertebrata</taxon>
        <taxon>Euteleostomi</taxon>
        <taxon>Amphibia</taxon>
        <taxon>Batrachia</taxon>
        <taxon>Anura</taxon>
        <taxon>Pipoidea</taxon>
        <taxon>Pipidae</taxon>
        <taxon>Xenopodinae</taxon>
        <taxon>Xenopus</taxon>
        <taxon>Xenopus</taxon>
    </lineage>
</organism>
<sequence>MAMQAHYEAEATEEEHFGPQAISRLEQCGINANDVKKLEEAGFHTVEAVAYAPKKELLNIKGISEAKAEKILAEAAKLVPMGFTTATEFHQRRSEIIQISTGSKELDKLLQGGVETGSITEMFGEFRTGKTQLCHTLAVTCQLPIDRGGGEGKAMYIDTEGTFRPERLLAVAERYGLSGSDVLDNVAYARAFNTDHQTQLLYQASAMMAESRYALLIVDSATALYRTDYSGRGELSARQMHLARFLRMLLRLADEFGVAVVITNQVVAQVDGAAMFAADPKKPIGGNIIAHASTTRLYLRKGRGETRICKIYDSPCLPEAEAMFAINADGVGDAKD</sequence>